<sequence length="498" mass="53960">MRINPTTSDPEVSIREKKNLGRIAQIIGPVLDVAFPPGKMPNIYNALVVKGRDTLGQEINVTCEVQQLLGNNRVRAVAMSATEGLKRGMDVVDMGKPLSVPVGGATLGRIFNVLGEPVDNLGPVDTRTTSPIHKSAPAFIQLDTKLSIFETGIKVVDLLAPYRRGGKIGLFGGAGVGKTVLIMELINNIAKAHGGVSVFGGVGERTREGNDLYMEMKESGVINEQNLAESKVALVYGQMNEPPGARMRVGLTALTMAEYFRDVNEQDVLLFIDNIFRFVQAGSEVSALLGRMPSAVGYQPTLSTEMGTLQERITSTKKGSITSIQAVYVPADDLTDPAPATTFAHLDATTVLSRGLAAKGIYPAVDPLDSTSTMLQPRIVGEEHYDTAQQVKQTLQRYKELQDIIAILGLDELSEEDRLTVARARKIERFLSQPFFVAEVFTGSPGKYVGLAETIRGFKLILSGEFDSLPEQAFYLVGNIDEATAKATNLEMESKLKK</sequence>
<protein>
    <recommendedName>
        <fullName evidence="2">ATP synthase subunit beta, chloroplastic</fullName>
        <ecNumber evidence="2">7.1.2.2</ecNumber>
    </recommendedName>
    <alternativeName>
        <fullName evidence="2">ATP synthase F1 sector subunit beta</fullName>
    </alternativeName>
    <alternativeName>
        <fullName evidence="2">F-ATPase subunit beta</fullName>
    </alternativeName>
</protein>
<keyword id="KW-0066">ATP synthesis</keyword>
<keyword id="KW-0067">ATP-binding</keyword>
<keyword id="KW-0139">CF(1)</keyword>
<keyword id="KW-0150">Chloroplast</keyword>
<keyword id="KW-0375">Hydrogen ion transport</keyword>
<keyword id="KW-0406">Ion transport</keyword>
<keyword id="KW-0472">Membrane</keyword>
<keyword id="KW-0547">Nucleotide-binding</keyword>
<keyword id="KW-0597">Phosphoprotein</keyword>
<keyword id="KW-0934">Plastid</keyword>
<keyword id="KW-0793">Thylakoid</keyword>
<keyword id="KW-1278">Translocase</keyword>
<keyword id="KW-0813">Transport</keyword>
<proteinExistence type="inferred from homology"/>
<reference key="1">
    <citation type="submission" date="2007-03" db="EMBL/GenBank/DDBJ databases">
        <title>Sequencing analysis of Capsella bursa-pastoris JO22 chloroplast DNA.</title>
        <authorList>
            <person name="Hosouchi T."/>
            <person name="Tsuruoka H."/>
            <person name="Kotani H."/>
        </authorList>
    </citation>
    <scope>NUCLEOTIDE SEQUENCE [LARGE SCALE GENOMIC DNA]</scope>
</reference>
<gene>
    <name evidence="2" type="primary">atpB</name>
</gene>
<evidence type="ECO:0000250" key="1">
    <source>
        <dbReference type="UniProtKB" id="P19366"/>
    </source>
</evidence>
<evidence type="ECO:0000255" key="2">
    <source>
        <dbReference type="HAMAP-Rule" id="MF_01347"/>
    </source>
</evidence>
<name>ATPB_CAPBU</name>
<accession>A4QKJ9</accession>
<geneLocation type="chloroplast"/>
<feature type="chain" id="PRO_0000339609" description="ATP synthase subunit beta, chloroplastic">
    <location>
        <begin position="1"/>
        <end position="498"/>
    </location>
</feature>
<feature type="binding site" evidence="2">
    <location>
        <begin position="172"/>
        <end position="179"/>
    </location>
    <ligand>
        <name>ATP</name>
        <dbReference type="ChEBI" id="CHEBI:30616"/>
    </ligand>
</feature>
<feature type="modified residue" description="Phosphothreonine" evidence="1">
    <location>
        <position position="6"/>
    </location>
</feature>
<feature type="modified residue" description="Phosphoserine" evidence="1">
    <location>
        <position position="13"/>
    </location>
</feature>
<dbReference type="EC" id="7.1.2.2" evidence="2"/>
<dbReference type="EMBL" id="AP009371">
    <property type="protein sequence ID" value="BAF50204.1"/>
    <property type="molecule type" value="Genomic_DNA"/>
</dbReference>
<dbReference type="RefSeq" id="YP_001123380.1">
    <property type="nucleotide sequence ID" value="NC_009270.1"/>
</dbReference>
<dbReference type="SMR" id="A4QKJ9"/>
<dbReference type="GeneID" id="4961709"/>
<dbReference type="GO" id="GO:0009535">
    <property type="term" value="C:chloroplast thylakoid membrane"/>
    <property type="evidence" value="ECO:0007669"/>
    <property type="project" value="UniProtKB-SubCell"/>
</dbReference>
<dbReference type="GO" id="GO:0005739">
    <property type="term" value="C:mitochondrion"/>
    <property type="evidence" value="ECO:0007669"/>
    <property type="project" value="GOC"/>
</dbReference>
<dbReference type="GO" id="GO:0045259">
    <property type="term" value="C:proton-transporting ATP synthase complex"/>
    <property type="evidence" value="ECO:0007669"/>
    <property type="project" value="UniProtKB-KW"/>
</dbReference>
<dbReference type="GO" id="GO:0005524">
    <property type="term" value="F:ATP binding"/>
    <property type="evidence" value="ECO:0007669"/>
    <property type="project" value="UniProtKB-UniRule"/>
</dbReference>
<dbReference type="GO" id="GO:0016887">
    <property type="term" value="F:ATP hydrolysis activity"/>
    <property type="evidence" value="ECO:0007669"/>
    <property type="project" value="InterPro"/>
</dbReference>
<dbReference type="GO" id="GO:0046933">
    <property type="term" value="F:proton-transporting ATP synthase activity, rotational mechanism"/>
    <property type="evidence" value="ECO:0007669"/>
    <property type="project" value="UniProtKB-UniRule"/>
</dbReference>
<dbReference type="GO" id="GO:0042776">
    <property type="term" value="P:proton motive force-driven mitochondrial ATP synthesis"/>
    <property type="evidence" value="ECO:0007669"/>
    <property type="project" value="TreeGrafter"/>
</dbReference>
<dbReference type="CDD" id="cd18110">
    <property type="entry name" value="ATP-synt_F1_beta_C"/>
    <property type="match status" value="1"/>
</dbReference>
<dbReference type="CDD" id="cd18115">
    <property type="entry name" value="ATP-synt_F1_beta_N"/>
    <property type="match status" value="1"/>
</dbReference>
<dbReference type="CDD" id="cd01133">
    <property type="entry name" value="F1-ATPase_beta_CD"/>
    <property type="match status" value="1"/>
</dbReference>
<dbReference type="FunFam" id="1.10.1140.10:FF:000001">
    <property type="entry name" value="ATP synthase subunit beta"/>
    <property type="match status" value="1"/>
</dbReference>
<dbReference type="FunFam" id="3.40.50.300:FF:000026">
    <property type="entry name" value="ATP synthase subunit beta"/>
    <property type="match status" value="1"/>
</dbReference>
<dbReference type="FunFam" id="2.40.10.170:FF:000002">
    <property type="entry name" value="ATP synthase subunit beta, chloroplastic"/>
    <property type="match status" value="1"/>
</dbReference>
<dbReference type="Gene3D" id="2.40.10.170">
    <property type="match status" value="1"/>
</dbReference>
<dbReference type="Gene3D" id="1.10.1140.10">
    <property type="entry name" value="Bovine Mitochondrial F1-atpase, Atp Synthase Beta Chain, Chain D, domain 3"/>
    <property type="match status" value="1"/>
</dbReference>
<dbReference type="Gene3D" id="3.40.50.300">
    <property type="entry name" value="P-loop containing nucleotide triphosphate hydrolases"/>
    <property type="match status" value="1"/>
</dbReference>
<dbReference type="HAMAP" id="MF_01347">
    <property type="entry name" value="ATP_synth_beta_bact"/>
    <property type="match status" value="1"/>
</dbReference>
<dbReference type="InterPro" id="IPR003593">
    <property type="entry name" value="AAA+_ATPase"/>
</dbReference>
<dbReference type="InterPro" id="IPR055190">
    <property type="entry name" value="ATP-synt_VA_C"/>
</dbReference>
<dbReference type="InterPro" id="IPR005722">
    <property type="entry name" value="ATP_synth_F1_bsu"/>
</dbReference>
<dbReference type="InterPro" id="IPR020003">
    <property type="entry name" value="ATPase_a/bsu_AS"/>
</dbReference>
<dbReference type="InterPro" id="IPR050053">
    <property type="entry name" value="ATPase_alpha/beta_chains"/>
</dbReference>
<dbReference type="InterPro" id="IPR004100">
    <property type="entry name" value="ATPase_F1/V1/A1_a/bsu_N"/>
</dbReference>
<dbReference type="InterPro" id="IPR036121">
    <property type="entry name" value="ATPase_F1/V1/A1_a/bsu_N_sf"/>
</dbReference>
<dbReference type="InterPro" id="IPR000194">
    <property type="entry name" value="ATPase_F1/V1/A1_a/bsu_nucl-bd"/>
</dbReference>
<dbReference type="InterPro" id="IPR024034">
    <property type="entry name" value="ATPase_F1/V1_b/a_C"/>
</dbReference>
<dbReference type="InterPro" id="IPR027417">
    <property type="entry name" value="P-loop_NTPase"/>
</dbReference>
<dbReference type="NCBIfam" id="TIGR01039">
    <property type="entry name" value="atpD"/>
    <property type="match status" value="1"/>
</dbReference>
<dbReference type="PANTHER" id="PTHR15184">
    <property type="entry name" value="ATP SYNTHASE"/>
    <property type="match status" value="1"/>
</dbReference>
<dbReference type="PANTHER" id="PTHR15184:SF71">
    <property type="entry name" value="ATP SYNTHASE SUBUNIT BETA, MITOCHONDRIAL"/>
    <property type="match status" value="1"/>
</dbReference>
<dbReference type="Pfam" id="PF00006">
    <property type="entry name" value="ATP-synt_ab"/>
    <property type="match status" value="1"/>
</dbReference>
<dbReference type="Pfam" id="PF02874">
    <property type="entry name" value="ATP-synt_ab_N"/>
    <property type="match status" value="1"/>
</dbReference>
<dbReference type="Pfam" id="PF22919">
    <property type="entry name" value="ATP-synt_VA_C"/>
    <property type="match status" value="1"/>
</dbReference>
<dbReference type="SMART" id="SM00382">
    <property type="entry name" value="AAA"/>
    <property type="match status" value="1"/>
</dbReference>
<dbReference type="SUPFAM" id="SSF47917">
    <property type="entry name" value="C-terminal domain of alpha and beta subunits of F1 ATP synthase"/>
    <property type="match status" value="1"/>
</dbReference>
<dbReference type="SUPFAM" id="SSF50615">
    <property type="entry name" value="N-terminal domain of alpha and beta subunits of F1 ATP synthase"/>
    <property type="match status" value="1"/>
</dbReference>
<dbReference type="SUPFAM" id="SSF52540">
    <property type="entry name" value="P-loop containing nucleoside triphosphate hydrolases"/>
    <property type="match status" value="1"/>
</dbReference>
<dbReference type="PROSITE" id="PS00152">
    <property type="entry name" value="ATPASE_ALPHA_BETA"/>
    <property type="match status" value="1"/>
</dbReference>
<comment type="function">
    <text evidence="2">Produces ATP from ADP in the presence of a proton gradient across the membrane. The catalytic sites are hosted primarily by the beta subunits.</text>
</comment>
<comment type="catalytic activity">
    <reaction evidence="2">
        <text>ATP + H2O + 4 H(+)(in) = ADP + phosphate + 5 H(+)(out)</text>
        <dbReference type="Rhea" id="RHEA:57720"/>
        <dbReference type="ChEBI" id="CHEBI:15377"/>
        <dbReference type="ChEBI" id="CHEBI:15378"/>
        <dbReference type="ChEBI" id="CHEBI:30616"/>
        <dbReference type="ChEBI" id="CHEBI:43474"/>
        <dbReference type="ChEBI" id="CHEBI:456216"/>
        <dbReference type="EC" id="7.1.2.2"/>
    </reaction>
</comment>
<comment type="subunit">
    <text evidence="2">F-type ATPases have 2 components, CF(1) - the catalytic core - and CF(0) - the membrane proton channel. CF(1) has five subunits: alpha(3), beta(3), gamma(1), delta(1), epsilon(1). CF(0) has four main subunits: a(1), b(1), b'(1) and c(9-12).</text>
</comment>
<comment type="subcellular location">
    <subcellularLocation>
        <location evidence="2">Plastid</location>
        <location evidence="2">Chloroplast thylakoid membrane</location>
        <topology evidence="2">Peripheral membrane protein</topology>
    </subcellularLocation>
</comment>
<comment type="similarity">
    <text evidence="2">Belongs to the ATPase alpha/beta chains family.</text>
</comment>
<organism>
    <name type="scientific">Capsella bursa-pastoris</name>
    <name type="common">Shepherd's purse</name>
    <name type="synonym">Thlaspi bursa-pastoris</name>
    <dbReference type="NCBI Taxonomy" id="3719"/>
    <lineage>
        <taxon>Eukaryota</taxon>
        <taxon>Viridiplantae</taxon>
        <taxon>Streptophyta</taxon>
        <taxon>Embryophyta</taxon>
        <taxon>Tracheophyta</taxon>
        <taxon>Spermatophyta</taxon>
        <taxon>Magnoliopsida</taxon>
        <taxon>eudicotyledons</taxon>
        <taxon>Gunneridae</taxon>
        <taxon>Pentapetalae</taxon>
        <taxon>rosids</taxon>
        <taxon>malvids</taxon>
        <taxon>Brassicales</taxon>
        <taxon>Brassicaceae</taxon>
        <taxon>Camelineae</taxon>
        <taxon>Capsella</taxon>
    </lineage>
</organism>